<proteinExistence type="inferred from homology"/>
<accession>B5XNR7</accession>
<gene>
    <name evidence="1" type="primary">pdxB</name>
    <name type="ordered locus">KPK_1434</name>
</gene>
<sequence>MKILVDENMPYARELFSRLGDVQAVPGRPVPAEALTDADALMVRSVTRVNEALLSGKAVKFVGTATAGTDHVDQAWLQQAGIGFSAAPGCNAIAVVEYVFSSLLMLAERDGFALRDRTVGIVGVGNVGGRLQKRLEALGIKTLLCDPPRAERGDEGDFRSLDALVQEADVLTFHTPLYKEGPYKTQHLADESLISRLKPGTILINACRGPVVDNAALLKRLEAGQPLSVVLDVWEPEPDLNVELLKRVDIGTAHIAGYTLEGKARGTTQVFEAYSAFIGHPQQVALDTLLPAPEFGRITLHGPLDQPTLKRLVHLVYDVRRDDAPLRKVAGVAGEFDKLRKNYQERREWSSLYVQCSDAQAATLLRQLGFNAVHHPVR</sequence>
<organism>
    <name type="scientific">Klebsiella pneumoniae (strain 342)</name>
    <dbReference type="NCBI Taxonomy" id="507522"/>
    <lineage>
        <taxon>Bacteria</taxon>
        <taxon>Pseudomonadati</taxon>
        <taxon>Pseudomonadota</taxon>
        <taxon>Gammaproteobacteria</taxon>
        <taxon>Enterobacterales</taxon>
        <taxon>Enterobacteriaceae</taxon>
        <taxon>Klebsiella/Raoultella group</taxon>
        <taxon>Klebsiella</taxon>
        <taxon>Klebsiella pneumoniae complex</taxon>
    </lineage>
</organism>
<keyword id="KW-0963">Cytoplasm</keyword>
<keyword id="KW-0520">NAD</keyword>
<keyword id="KW-0560">Oxidoreductase</keyword>
<keyword id="KW-0664">Pyridoxine biosynthesis</keyword>
<feature type="chain" id="PRO_1000188270" description="Erythronate-4-phosphate dehydrogenase">
    <location>
        <begin position="1"/>
        <end position="378"/>
    </location>
</feature>
<feature type="active site" evidence="1">
    <location>
        <position position="208"/>
    </location>
</feature>
<feature type="active site" evidence="1">
    <location>
        <position position="237"/>
    </location>
</feature>
<feature type="active site" description="Proton donor" evidence="1">
    <location>
        <position position="254"/>
    </location>
</feature>
<feature type="binding site" evidence="1">
    <location>
        <position position="45"/>
    </location>
    <ligand>
        <name>substrate</name>
    </ligand>
</feature>
<feature type="binding site" evidence="1">
    <location>
        <position position="66"/>
    </location>
    <ligand>
        <name>substrate</name>
    </ligand>
</feature>
<feature type="binding site" evidence="1">
    <location>
        <position position="146"/>
    </location>
    <ligand>
        <name>NAD(+)</name>
        <dbReference type="ChEBI" id="CHEBI:57540"/>
    </ligand>
</feature>
<feature type="binding site" evidence="1">
    <location>
        <position position="175"/>
    </location>
    <ligand>
        <name>NAD(+)</name>
        <dbReference type="ChEBI" id="CHEBI:57540"/>
    </ligand>
</feature>
<feature type="binding site" evidence="1">
    <location>
        <position position="232"/>
    </location>
    <ligand>
        <name>NAD(+)</name>
        <dbReference type="ChEBI" id="CHEBI:57540"/>
    </ligand>
</feature>
<feature type="binding site" evidence="1">
    <location>
        <position position="257"/>
    </location>
    <ligand>
        <name>NAD(+)</name>
        <dbReference type="ChEBI" id="CHEBI:57540"/>
    </ligand>
</feature>
<feature type="binding site" evidence="1">
    <location>
        <position position="258"/>
    </location>
    <ligand>
        <name>substrate</name>
    </ligand>
</feature>
<reference key="1">
    <citation type="journal article" date="2008" name="PLoS Genet.">
        <title>Complete genome sequence of the N2-fixing broad host range endophyte Klebsiella pneumoniae 342 and virulence predictions verified in mice.</title>
        <authorList>
            <person name="Fouts D.E."/>
            <person name="Tyler H.L."/>
            <person name="DeBoy R.T."/>
            <person name="Daugherty S."/>
            <person name="Ren Q."/>
            <person name="Badger J.H."/>
            <person name="Durkin A.S."/>
            <person name="Huot H."/>
            <person name="Shrivastava S."/>
            <person name="Kothari S."/>
            <person name="Dodson R.J."/>
            <person name="Mohamoud Y."/>
            <person name="Khouri H."/>
            <person name="Roesch L.F.W."/>
            <person name="Krogfelt K.A."/>
            <person name="Struve C."/>
            <person name="Triplett E.W."/>
            <person name="Methe B.A."/>
        </authorList>
    </citation>
    <scope>NUCLEOTIDE SEQUENCE [LARGE SCALE GENOMIC DNA]</scope>
    <source>
        <strain>342</strain>
    </source>
</reference>
<name>PDXB_KLEP3</name>
<comment type="function">
    <text evidence="1">Catalyzes the oxidation of erythronate-4-phosphate to 3-hydroxy-2-oxo-4-phosphonooxybutanoate.</text>
</comment>
<comment type="catalytic activity">
    <reaction evidence="1">
        <text>4-phospho-D-erythronate + NAD(+) = (R)-3-hydroxy-2-oxo-4-phosphooxybutanoate + NADH + H(+)</text>
        <dbReference type="Rhea" id="RHEA:18829"/>
        <dbReference type="ChEBI" id="CHEBI:15378"/>
        <dbReference type="ChEBI" id="CHEBI:57540"/>
        <dbReference type="ChEBI" id="CHEBI:57945"/>
        <dbReference type="ChEBI" id="CHEBI:58538"/>
        <dbReference type="ChEBI" id="CHEBI:58766"/>
        <dbReference type="EC" id="1.1.1.290"/>
    </reaction>
</comment>
<comment type="pathway">
    <text evidence="1">Cofactor biosynthesis; pyridoxine 5'-phosphate biosynthesis; pyridoxine 5'-phosphate from D-erythrose 4-phosphate: step 2/5.</text>
</comment>
<comment type="subunit">
    <text evidence="1">Homodimer.</text>
</comment>
<comment type="subcellular location">
    <subcellularLocation>
        <location evidence="1">Cytoplasm</location>
    </subcellularLocation>
</comment>
<comment type="similarity">
    <text evidence="1">Belongs to the D-isomer specific 2-hydroxyacid dehydrogenase family. PdxB subfamily.</text>
</comment>
<protein>
    <recommendedName>
        <fullName evidence="1">Erythronate-4-phosphate dehydrogenase</fullName>
        <ecNumber evidence="1">1.1.1.290</ecNumber>
    </recommendedName>
</protein>
<dbReference type="EC" id="1.1.1.290" evidence="1"/>
<dbReference type="EMBL" id="CP000964">
    <property type="protein sequence ID" value="ACI11155.1"/>
    <property type="molecule type" value="Genomic_DNA"/>
</dbReference>
<dbReference type="SMR" id="B5XNR7"/>
<dbReference type="KEGG" id="kpe:KPK_1434"/>
<dbReference type="HOGENOM" id="CLU_019796_4_0_6"/>
<dbReference type="UniPathway" id="UPA00244">
    <property type="reaction ID" value="UER00310"/>
</dbReference>
<dbReference type="Proteomes" id="UP000001734">
    <property type="component" value="Chromosome"/>
</dbReference>
<dbReference type="GO" id="GO:0005829">
    <property type="term" value="C:cytosol"/>
    <property type="evidence" value="ECO:0007669"/>
    <property type="project" value="TreeGrafter"/>
</dbReference>
<dbReference type="GO" id="GO:0033711">
    <property type="term" value="F:4-phosphoerythronate dehydrogenase activity"/>
    <property type="evidence" value="ECO:0007669"/>
    <property type="project" value="UniProtKB-EC"/>
</dbReference>
<dbReference type="GO" id="GO:0051287">
    <property type="term" value="F:NAD binding"/>
    <property type="evidence" value="ECO:0007669"/>
    <property type="project" value="InterPro"/>
</dbReference>
<dbReference type="GO" id="GO:0046983">
    <property type="term" value="F:protein dimerization activity"/>
    <property type="evidence" value="ECO:0007669"/>
    <property type="project" value="InterPro"/>
</dbReference>
<dbReference type="GO" id="GO:0036001">
    <property type="term" value="P:'de novo' pyridoxal 5'-phosphate biosynthetic process"/>
    <property type="evidence" value="ECO:0007669"/>
    <property type="project" value="TreeGrafter"/>
</dbReference>
<dbReference type="GO" id="GO:0008615">
    <property type="term" value="P:pyridoxine biosynthetic process"/>
    <property type="evidence" value="ECO:0007669"/>
    <property type="project" value="UniProtKB-UniRule"/>
</dbReference>
<dbReference type="CDD" id="cd12158">
    <property type="entry name" value="ErythrP_dh"/>
    <property type="match status" value="1"/>
</dbReference>
<dbReference type="FunFam" id="3.30.1370.170:FF:000001">
    <property type="entry name" value="Erythronate-4-phosphate dehydrogenase"/>
    <property type="match status" value="1"/>
</dbReference>
<dbReference type="FunFam" id="3.40.50.720:FF:000093">
    <property type="entry name" value="Erythronate-4-phosphate dehydrogenase"/>
    <property type="match status" value="1"/>
</dbReference>
<dbReference type="Gene3D" id="3.30.1370.170">
    <property type="match status" value="1"/>
</dbReference>
<dbReference type="Gene3D" id="3.40.50.720">
    <property type="entry name" value="NAD(P)-binding Rossmann-like Domain"/>
    <property type="match status" value="2"/>
</dbReference>
<dbReference type="HAMAP" id="MF_01825">
    <property type="entry name" value="PdxB"/>
    <property type="match status" value="1"/>
</dbReference>
<dbReference type="InterPro" id="IPR006139">
    <property type="entry name" value="D-isomer_2_OHA_DH_cat_dom"/>
</dbReference>
<dbReference type="InterPro" id="IPR029753">
    <property type="entry name" value="D-isomer_DH_CS"/>
</dbReference>
<dbReference type="InterPro" id="IPR029752">
    <property type="entry name" value="D-isomer_DH_CS1"/>
</dbReference>
<dbReference type="InterPro" id="IPR006140">
    <property type="entry name" value="D-isomer_DH_NAD-bd"/>
</dbReference>
<dbReference type="InterPro" id="IPR020921">
    <property type="entry name" value="Erythronate-4-P_DHase"/>
</dbReference>
<dbReference type="InterPro" id="IPR024531">
    <property type="entry name" value="Erythronate-4-P_DHase_dimer"/>
</dbReference>
<dbReference type="InterPro" id="IPR036291">
    <property type="entry name" value="NAD(P)-bd_dom_sf"/>
</dbReference>
<dbReference type="InterPro" id="IPR038251">
    <property type="entry name" value="PdxB_dimer_sf"/>
</dbReference>
<dbReference type="NCBIfam" id="NF001309">
    <property type="entry name" value="PRK00257.1"/>
    <property type="match status" value="1"/>
</dbReference>
<dbReference type="NCBIfam" id="NF011966">
    <property type="entry name" value="PRK15438.1"/>
    <property type="match status" value="1"/>
</dbReference>
<dbReference type="PANTHER" id="PTHR42938">
    <property type="entry name" value="FORMATE DEHYDROGENASE 1"/>
    <property type="match status" value="1"/>
</dbReference>
<dbReference type="PANTHER" id="PTHR42938:SF9">
    <property type="entry name" value="FORMATE DEHYDROGENASE 1"/>
    <property type="match status" value="1"/>
</dbReference>
<dbReference type="Pfam" id="PF00389">
    <property type="entry name" value="2-Hacid_dh"/>
    <property type="match status" value="1"/>
</dbReference>
<dbReference type="Pfam" id="PF02826">
    <property type="entry name" value="2-Hacid_dh_C"/>
    <property type="match status" value="1"/>
</dbReference>
<dbReference type="Pfam" id="PF11890">
    <property type="entry name" value="DUF3410"/>
    <property type="match status" value="1"/>
</dbReference>
<dbReference type="SUPFAM" id="SSF52283">
    <property type="entry name" value="Formate/glycerate dehydrogenase catalytic domain-like"/>
    <property type="match status" value="1"/>
</dbReference>
<dbReference type="SUPFAM" id="SSF51735">
    <property type="entry name" value="NAD(P)-binding Rossmann-fold domains"/>
    <property type="match status" value="1"/>
</dbReference>
<dbReference type="PROSITE" id="PS00065">
    <property type="entry name" value="D_2_HYDROXYACID_DH_1"/>
    <property type="match status" value="1"/>
</dbReference>
<dbReference type="PROSITE" id="PS00671">
    <property type="entry name" value="D_2_HYDROXYACID_DH_3"/>
    <property type="match status" value="1"/>
</dbReference>
<evidence type="ECO:0000255" key="1">
    <source>
        <dbReference type="HAMAP-Rule" id="MF_01825"/>
    </source>
</evidence>